<reference key="1">
    <citation type="journal article" date="2004" name="Nature">
        <title>The sequence and analysis of duplication-rich human chromosome 16.</title>
        <authorList>
            <person name="Martin J."/>
            <person name="Han C."/>
            <person name="Gordon L.A."/>
            <person name="Terry A."/>
            <person name="Prabhakar S."/>
            <person name="She X."/>
            <person name="Xie G."/>
            <person name="Hellsten U."/>
            <person name="Chan Y.M."/>
            <person name="Altherr M."/>
            <person name="Couronne O."/>
            <person name="Aerts A."/>
            <person name="Bajorek E."/>
            <person name="Black S."/>
            <person name="Blumer H."/>
            <person name="Branscomb E."/>
            <person name="Brown N.C."/>
            <person name="Bruno W.J."/>
            <person name="Buckingham J.M."/>
            <person name="Callen D.F."/>
            <person name="Campbell C.S."/>
            <person name="Campbell M.L."/>
            <person name="Campbell E.W."/>
            <person name="Caoile C."/>
            <person name="Challacombe J.F."/>
            <person name="Chasteen L.A."/>
            <person name="Chertkov O."/>
            <person name="Chi H.C."/>
            <person name="Christensen M."/>
            <person name="Clark L.M."/>
            <person name="Cohn J.D."/>
            <person name="Denys M."/>
            <person name="Detter J.C."/>
            <person name="Dickson M."/>
            <person name="Dimitrijevic-Bussod M."/>
            <person name="Escobar J."/>
            <person name="Fawcett J.J."/>
            <person name="Flowers D."/>
            <person name="Fotopulos D."/>
            <person name="Glavina T."/>
            <person name="Gomez M."/>
            <person name="Gonzales E."/>
            <person name="Goodstein D."/>
            <person name="Goodwin L.A."/>
            <person name="Grady D.L."/>
            <person name="Grigoriev I."/>
            <person name="Groza M."/>
            <person name="Hammon N."/>
            <person name="Hawkins T."/>
            <person name="Haydu L."/>
            <person name="Hildebrand C.E."/>
            <person name="Huang W."/>
            <person name="Israni S."/>
            <person name="Jett J."/>
            <person name="Jewett P.B."/>
            <person name="Kadner K."/>
            <person name="Kimball H."/>
            <person name="Kobayashi A."/>
            <person name="Krawczyk M.-C."/>
            <person name="Leyba T."/>
            <person name="Longmire J.L."/>
            <person name="Lopez F."/>
            <person name="Lou Y."/>
            <person name="Lowry S."/>
            <person name="Ludeman T."/>
            <person name="Manohar C.F."/>
            <person name="Mark G.A."/>
            <person name="McMurray K.L."/>
            <person name="Meincke L.J."/>
            <person name="Morgan J."/>
            <person name="Moyzis R.K."/>
            <person name="Mundt M.O."/>
            <person name="Munk A.C."/>
            <person name="Nandkeshwar R.D."/>
            <person name="Pitluck S."/>
            <person name="Pollard M."/>
            <person name="Predki P."/>
            <person name="Parson-Quintana B."/>
            <person name="Ramirez L."/>
            <person name="Rash S."/>
            <person name="Retterer J."/>
            <person name="Ricke D.O."/>
            <person name="Robinson D.L."/>
            <person name="Rodriguez A."/>
            <person name="Salamov A."/>
            <person name="Saunders E.H."/>
            <person name="Scott D."/>
            <person name="Shough T."/>
            <person name="Stallings R.L."/>
            <person name="Stalvey M."/>
            <person name="Sutherland R.D."/>
            <person name="Tapia R."/>
            <person name="Tesmer J.G."/>
            <person name="Thayer N."/>
            <person name="Thompson L.S."/>
            <person name="Tice H."/>
            <person name="Torney D.C."/>
            <person name="Tran-Gyamfi M."/>
            <person name="Tsai M."/>
            <person name="Ulanovsky L.E."/>
            <person name="Ustaszewska A."/>
            <person name="Vo N."/>
            <person name="White P.S."/>
            <person name="Williams A.L."/>
            <person name="Wills P.L."/>
            <person name="Wu J.-R."/>
            <person name="Wu K."/>
            <person name="Yang J."/>
            <person name="DeJong P."/>
            <person name="Bruce D."/>
            <person name="Doggett N.A."/>
            <person name="Deaven L."/>
            <person name="Schmutz J."/>
            <person name="Grimwood J."/>
            <person name="Richardson P."/>
            <person name="Rokhsar D.S."/>
            <person name="Eichler E.E."/>
            <person name="Gilna P."/>
            <person name="Lucas S.M."/>
            <person name="Myers R.M."/>
            <person name="Rubin E.M."/>
            <person name="Pennacchio L.A."/>
        </authorList>
    </citation>
    <scope>NUCLEOTIDE SEQUENCE [LARGE SCALE GENOMIC DNA]</scope>
</reference>
<proteinExistence type="evidence at protein level"/>
<evidence type="ECO:0000255" key="1"/>
<evidence type="ECO:0000256" key="2">
    <source>
        <dbReference type="SAM" id="MobiDB-lite"/>
    </source>
</evidence>
<evidence type="ECO:0000305" key="3"/>
<evidence type="ECO:0000312" key="4">
    <source>
        <dbReference type="HGNC" id="HGNC:27091"/>
    </source>
</evidence>
<sequence length="556" mass="58815">MEQEARVLRAAGGFGRARRLLASASWVPCIVLGLVLSSEELLTAQPAPHCRPDPTLLPPALRALRGPALLDAAIPRLGPTRAPAEALGVLSPSYLAPLTRAPRPSSWASCSGAAAGPTWNLVCGDGWKVPLEQVSHLLGWLLGCVILGAGCDRFGRRAVFVASLVLTTGLGASEALAASFPTLLVLRLLHGGTLAGALLALYLARLELCDPPHRLAFSMGAGLFSVVGTLLLPGLAALVQDWRLLQGLGALMSGLLLLFWGFPALFPESPCWLLATGQVARARKILWRFAEASGVGPGDSSLEENSLATELTMLSARSPQPRYHSPLGLLRTRVTWRNGLILGFSSLVGGGIRASFRRSLAPQVPTFYLPYFLEAGLEAAALVFLLLTADCCGRRPVLLLGTMVTGLASLLLLAGAQYLPGWTVLFLSVLGLLASRAVSALSSLFAAEVFPTVIRGAGLGLVLGAGFLGQAAGPLDTLHGRQGFFLQQVVFASLAVLALLCVLLLPESRSRGLPQSLQDADRLRRSPLLRGRPRQDHLPLLPPSNSYWAGHTPEQH</sequence>
<accession>A6NKX4</accession>
<accession>A0A804HL90</accession>
<accession>S4R3Q8</accession>
<organism>
    <name type="scientific">Homo sapiens</name>
    <name type="common">Human</name>
    <dbReference type="NCBI Taxonomy" id="9606"/>
    <lineage>
        <taxon>Eukaryota</taxon>
        <taxon>Metazoa</taxon>
        <taxon>Chordata</taxon>
        <taxon>Craniata</taxon>
        <taxon>Vertebrata</taxon>
        <taxon>Euteleostomi</taxon>
        <taxon>Mammalia</taxon>
        <taxon>Eutheria</taxon>
        <taxon>Euarchontoglires</taxon>
        <taxon>Primates</taxon>
        <taxon>Haplorrhini</taxon>
        <taxon>Catarrhini</taxon>
        <taxon>Hominidae</taxon>
        <taxon>Homo</taxon>
    </lineage>
</organism>
<name>S22AV_HUMAN</name>
<protein>
    <recommendedName>
        <fullName evidence="3">Putative solute carrier family 22 member 31</fullName>
    </recommendedName>
</protein>
<gene>
    <name evidence="4" type="primary">SLC22A31</name>
</gene>
<feature type="chain" id="PRO_0000333031" description="Putative solute carrier family 22 member 31">
    <location>
        <begin position="1"/>
        <end position="556"/>
    </location>
</feature>
<feature type="topological domain" description="Cytoplasmic" evidence="3">
    <location>
        <begin position="1"/>
        <end position="23"/>
    </location>
</feature>
<feature type="transmembrane region" description="Helical" evidence="1">
    <location>
        <begin position="24"/>
        <end position="44"/>
    </location>
</feature>
<feature type="topological domain" description="Extracellular" evidence="3">
    <location>
        <begin position="45"/>
        <end position="128"/>
    </location>
</feature>
<feature type="transmembrane region" description="Helical" evidence="1">
    <location>
        <begin position="129"/>
        <end position="149"/>
    </location>
</feature>
<feature type="topological domain" description="Cytoplasmic" evidence="3">
    <location>
        <begin position="150"/>
        <end position="157"/>
    </location>
</feature>
<feature type="transmembrane region" description="Helical" evidence="1">
    <location>
        <begin position="158"/>
        <end position="178"/>
    </location>
</feature>
<feature type="topological domain" description="Extracellular" evidence="3">
    <location>
        <begin position="179"/>
        <end position="182"/>
    </location>
</feature>
<feature type="transmembrane region" description="Helical" evidence="1">
    <location>
        <begin position="183"/>
        <end position="203"/>
    </location>
</feature>
<feature type="topological domain" description="Cytoplasmic" evidence="3">
    <location>
        <begin position="204"/>
        <end position="218"/>
    </location>
</feature>
<feature type="transmembrane region" description="Helical" evidence="1">
    <location>
        <begin position="219"/>
        <end position="239"/>
    </location>
</feature>
<feature type="topological domain" description="Extracellular" evidence="3">
    <location>
        <begin position="240"/>
        <end position="246"/>
    </location>
</feature>
<feature type="transmembrane region" description="Helical" evidence="1">
    <location>
        <begin position="247"/>
        <end position="267"/>
    </location>
</feature>
<feature type="topological domain" description="Cytoplasmic" evidence="3">
    <location>
        <begin position="268"/>
        <end position="339"/>
    </location>
</feature>
<feature type="transmembrane region" description="Helical" evidence="1">
    <location>
        <begin position="340"/>
        <end position="357"/>
    </location>
</feature>
<feature type="topological domain" description="Extracellular" evidence="3">
    <location>
        <begin position="358"/>
        <end position="366"/>
    </location>
</feature>
<feature type="transmembrane region" description="Helical" evidence="1">
    <location>
        <begin position="367"/>
        <end position="387"/>
    </location>
</feature>
<feature type="topological domain" description="Cytoplasmic" evidence="3">
    <location>
        <begin position="388"/>
        <end position="395"/>
    </location>
</feature>
<feature type="transmembrane region" description="Helical" evidence="1">
    <location>
        <begin position="396"/>
        <end position="416"/>
    </location>
</feature>
<feature type="topological domain" description="Extracellular" evidence="3">
    <location>
        <begin position="417"/>
        <end position="420"/>
    </location>
</feature>
<feature type="transmembrane region" description="Helical" evidence="1">
    <location>
        <begin position="421"/>
        <end position="441"/>
    </location>
</feature>
<feature type="topological domain" description="Cytoplasmic" evidence="3">
    <location>
        <begin position="442"/>
        <end position="448"/>
    </location>
</feature>
<feature type="transmembrane region" description="Helical" evidence="1">
    <location>
        <begin position="449"/>
        <end position="469"/>
    </location>
</feature>
<feature type="topological domain" description="Extracellular" evidence="3">
    <location>
        <begin position="470"/>
        <end position="483"/>
    </location>
</feature>
<feature type="transmembrane region" description="Helical" evidence="1">
    <location>
        <begin position="484"/>
        <end position="504"/>
    </location>
</feature>
<feature type="topological domain" description="Cytoplasmic" evidence="3">
    <location>
        <begin position="505"/>
        <end position="556"/>
    </location>
</feature>
<feature type="region of interest" description="Disordered" evidence="2">
    <location>
        <begin position="524"/>
        <end position="556"/>
    </location>
</feature>
<feature type="splice variant" id="VSP_062190" description="In isoform 2.">
    <original>MEQEARVLRAAGGFGRARRLLASASWVPCIVLGLVLSSEELLTAQPAPHCRPDPTLLPPALRALRGPALLDAAIPRLGPTRAPAEALGVLSPSYLAPLTRAPRPSSWASCSGAAAGPT</original>
    <variation>MPHQLSQN</variation>
    <location>
        <begin position="1"/>
        <end position="118"/>
    </location>
</feature>
<keyword id="KW-0025">Alternative splicing</keyword>
<keyword id="KW-0406">Ion transport</keyword>
<keyword id="KW-0472">Membrane</keyword>
<keyword id="KW-1267">Proteomics identification</keyword>
<keyword id="KW-1185">Reference proteome</keyword>
<keyword id="KW-0812">Transmembrane</keyword>
<keyword id="KW-1133">Transmembrane helix</keyword>
<keyword id="KW-0813">Transport</keyword>
<dbReference type="EMBL" id="AC009113">
    <property type="status" value="NOT_ANNOTATED_CDS"/>
    <property type="molecule type" value="Genomic_DNA"/>
</dbReference>
<dbReference type="CCDS" id="CCDS92209.1">
    <molecule id="A6NKX4-2"/>
</dbReference>
<dbReference type="RefSeq" id="NP_001371692.1">
    <molecule id="A6NKX4-2"/>
    <property type="nucleotide sequence ID" value="NM_001384763.1"/>
</dbReference>
<dbReference type="SMR" id="A6NKX4"/>
<dbReference type="FunCoup" id="A6NKX4">
    <property type="interactions" value="2"/>
</dbReference>
<dbReference type="STRING" id="9606.ENSP00000474621"/>
<dbReference type="TCDB" id="2.A.1.19.23">
    <property type="family name" value="the major facilitator superfamily (mfs)"/>
</dbReference>
<dbReference type="GlyGen" id="A6NKX4">
    <property type="glycosylation" value="1 site, 1 O-linked glycan (1 site)"/>
</dbReference>
<dbReference type="iPTMnet" id="A6NKX4"/>
<dbReference type="PhosphoSitePlus" id="A6NKX4"/>
<dbReference type="SwissPalm" id="A6NKX4"/>
<dbReference type="BioMuta" id="SLC22A31"/>
<dbReference type="MassIVE" id="A6NKX4"/>
<dbReference type="PaxDb" id="9606-ENSP00000481421"/>
<dbReference type="PeptideAtlas" id="A6NKX4"/>
<dbReference type="Antibodypedia" id="81518">
    <property type="antibodies" value="1 antibodies from 1 providers"/>
</dbReference>
<dbReference type="Ensembl" id="ENST00000682282.1">
    <molecule id="A6NKX4-2"/>
    <property type="protein sequence ID" value="ENSP00000508250.1"/>
    <property type="gene ID" value="ENSG00000259803.8"/>
</dbReference>
<dbReference type="MANE-Select" id="ENST00000682282.1">
    <molecule id="A6NKX4-2"/>
    <property type="protein sequence ID" value="ENSP00000508250.1"/>
    <property type="RefSeq nucleotide sequence ID" value="NM_001384763.1"/>
    <property type="RefSeq protein sequence ID" value="NP_001371692.1"/>
</dbReference>
<dbReference type="UCSC" id="uc059ymo.1">
    <property type="organism name" value="human"/>
</dbReference>
<dbReference type="AGR" id="HGNC:27091"/>
<dbReference type="GeneCards" id="SLC22A31"/>
<dbReference type="HGNC" id="HGNC:27091">
    <property type="gene designation" value="SLC22A31"/>
</dbReference>
<dbReference type="HPA" id="ENSG00000259803">
    <property type="expression patterns" value="Tissue enhanced (brain, lung, pancreas)"/>
</dbReference>
<dbReference type="neXtProt" id="NX_A6NKX4"/>
<dbReference type="OpenTargets" id="ENSG00000259803"/>
<dbReference type="VEuPathDB" id="HostDB:ENSG00000259803"/>
<dbReference type="eggNOG" id="KOG0255">
    <property type="taxonomic scope" value="Eukaryota"/>
</dbReference>
<dbReference type="GeneTree" id="ENSGT00940000162670"/>
<dbReference type="InParanoid" id="A6NKX4"/>
<dbReference type="OrthoDB" id="6612291at2759"/>
<dbReference type="PAN-GO" id="A6NKX4">
    <property type="GO annotations" value="0 GO annotations based on evolutionary models"/>
</dbReference>
<dbReference type="PhylomeDB" id="A6NKX4"/>
<dbReference type="Pharos" id="A6NKX4">
    <property type="development level" value="Tdark"/>
</dbReference>
<dbReference type="PRO" id="PR:A6NKX4"/>
<dbReference type="Proteomes" id="UP000005640">
    <property type="component" value="Chromosome 16"/>
</dbReference>
<dbReference type="RNAct" id="A6NKX4">
    <property type="molecule type" value="protein"/>
</dbReference>
<dbReference type="Bgee" id="ENSG00000259803">
    <property type="expression patterns" value="Expressed in cerebellar hemisphere and 118 other cell types or tissues"/>
</dbReference>
<dbReference type="ExpressionAtlas" id="A6NKX4">
    <property type="expression patterns" value="baseline and differential"/>
</dbReference>
<dbReference type="GO" id="GO:0016020">
    <property type="term" value="C:membrane"/>
    <property type="evidence" value="ECO:0007669"/>
    <property type="project" value="UniProtKB-SubCell"/>
</dbReference>
<dbReference type="GO" id="GO:0022857">
    <property type="term" value="F:transmembrane transporter activity"/>
    <property type="evidence" value="ECO:0007669"/>
    <property type="project" value="InterPro"/>
</dbReference>
<dbReference type="GO" id="GO:0006811">
    <property type="term" value="P:monoatomic ion transport"/>
    <property type="evidence" value="ECO:0007669"/>
    <property type="project" value="UniProtKB-KW"/>
</dbReference>
<dbReference type="CDD" id="cd17443">
    <property type="entry name" value="MFS_SLC22A31"/>
    <property type="match status" value="1"/>
</dbReference>
<dbReference type="Gene3D" id="1.20.1250.20">
    <property type="entry name" value="MFS general substrate transporter like domains"/>
    <property type="match status" value="1"/>
</dbReference>
<dbReference type="InterPro" id="IPR020846">
    <property type="entry name" value="MFS_dom"/>
</dbReference>
<dbReference type="InterPro" id="IPR005828">
    <property type="entry name" value="MFS_sugar_transport-like"/>
</dbReference>
<dbReference type="InterPro" id="IPR036259">
    <property type="entry name" value="MFS_trans_sf"/>
</dbReference>
<dbReference type="PANTHER" id="PTHR24064">
    <property type="entry name" value="SOLUTE CARRIER FAMILY 22 MEMBER"/>
    <property type="match status" value="1"/>
</dbReference>
<dbReference type="Pfam" id="PF00083">
    <property type="entry name" value="Sugar_tr"/>
    <property type="match status" value="1"/>
</dbReference>
<dbReference type="SUPFAM" id="SSF103473">
    <property type="entry name" value="MFS general substrate transporter"/>
    <property type="match status" value="1"/>
</dbReference>
<dbReference type="PROSITE" id="PS50850">
    <property type="entry name" value="MFS"/>
    <property type="match status" value="1"/>
</dbReference>
<comment type="function">
    <text evidence="3">Organic anion transporter that mediates the uptake of ions.</text>
</comment>
<comment type="subcellular location">
    <subcellularLocation>
        <location evidence="1">Membrane</location>
        <topology evidence="1">Multi-pass membrane protein</topology>
    </subcellularLocation>
</comment>
<comment type="alternative products">
    <event type="alternative splicing"/>
    <isoform>
        <id>A6NKX4-1</id>
        <name>1</name>
        <sequence type="displayed"/>
    </isoform>
    <isoform>
        <id>A6NKX4-2</id>
        <name>2</name>
        <sequence type="described" ref="VSP_062190"/>
    </isoform>
</comment>
<comment type="similarity">
    <text evidence="3">Belongs to the major facilitator (TC 2.A.1) superfamily. Organic cation transporter (TC 2.A.1.19) family.</text>
</comment>